<gene>
    <name type="primary">cstA</name>
    <name type="ordered locus">HP_1168</name>
</gene>
<sequence length="687" mass="74205">MQKSLVSLAWVFVAILGAICLGVLALHKGESINTLWLVVASACIYSIGYRFYSHFIAYKVLKLDDSRATPACVRNDGKDFVPTDKAITFGHHFAAIAGAGPLVGPILAAQMGYLPSILWILIGSVLGGCVHDFVVLFASIRRDGKSLGEMIKLEMGQFVGMIASLGILGIMLIIIAILAMVVVKALAHSPWGFFTIAMTIPIAILMGLYMRFFRPHKILEVSVIGFILLIIAIYAGKYVSLDPKLASIFTFEASSLAWMIMGYGFVASILPVWFLLAPRDYLSTFLKIGVIGVLVVAIIFVAPPLQIPKITPFVDGSGPVFAGSVFPFLFITVACGTISGFHALISSGTTPKMLAKESDARLVGYGSMVMESVVALMALVCAGILHPGLYFAINSPEVSIGKDIADAASVISSWGFNISAEEIREMTKNIGESSILSRTGGAPTFAIGLAMIVYHILGDPSVMAFWYHFAILFEALFILTAVDAGTRTARFMIQDLLGNVYKPLGDLSSYKAGIFATLLCVAGWGYFLYQGTIDPKGGIYTLWPLFGVSNQMLAGMALLLVTVVLFKMGRFKGAMISALPAVLILSITFYSGILKVVPKSDNSVLNNVSHVAQMQIIKEKMATTTDEKALKTLQKSFFNHAIDAILCVFFMLVALLVLIVSVRICSNAYFKNKIYPPLAETPYIKAS</sequence>
<reference key="1">
    <citation type="journal article" date="1997" name="Nature">
        <title>The complete genome sequence of the gastric pathogen Helicobacter pylori.</title>
        <authorList>
            <person name="Tomb J.-F."/>
            <person name="White O."/>
            <person name="Kerlavage A.R."/>
            <person name="Clayton R.A."/>
            <person name="Sutton G.G."/>
            <person name="Fleischmann R.D."/>
            <person name="Ketchum K.A."/>
            <person name="Klenk H.-P."/>
            <person name="Gill S.R."/>
            <person name="Dougherty B.A."/>
            <person name="Nelson K.E."/>
            <person name="Quackenbush J."/>
            <person name="Zhou L."/>
            <person name="Kirkness E.F."/>
            <person name="Peterson S.N."/>
            <person name="Loftus B.J."/>
            <person name="Richardson D.L."/>
            <person name="Dodson R.J."/>
            <person name="Khalak H.G."/>
            <person name="Glodek A."/>
            <person name="McKenney K."/>
            <person name="FitzGerald L.M."/>
            <person name="Lee N."/>
            <person name="Adams M.D."/>
            <person name="Hickey E.K."/>
            <person name="Berg D.E."/>
            <person name="Gocayne J.D."/>
            <person name="Utterback T.R."/>
            <person name="Peterson J.D."/>
            <person name="Kelley J.M."/>
            <person name="Cotton M.D."/>
            <person name="Weidman J.F."/>
            <person name="Fujii C."/>
            <person name="Bowman C."/>
            <person name="Watthey L."/>
            <person name="Wallin E."/>
            <person name="Hayes W.S."/>
            <person name="Borodovsky M."/>
            <person name="Karp P.D."/>
            <person name="Smith H.O."/>
            <person name="Fraser C.M."/>
            <person name="Venter J.C."/>
        </authorList>
    </citation>
    <scope>NUCLEOTIDE SEQUENCE [LARGE SCALE GENOMIC DNA]</scope>
    <source>
        <strain>ATCC 700392 / 26695</strain>
    </source>
</reference>
<name>CSTA_HELPY</name>
<keyword id="KW-0997">Cell inner membrane</keyword>
<keyword id="KW-1003">Cell membrane</keyword>
<keyword id="KW-0472">Membrane</keyword>
<keyword id="KW-0571">Peptide transport</keyword>
<keyword id="KW-0653">Protein transport</keyword>
<keyword id="KW-1185">Reference proteome</keyword>
<keyword id="KW-0812">Transmembrane</keyword>
<keyword id="KW-1133">Transmembrane helix</keyword>
<keyword id="KW-0813">Transport</keyword>
<dbReference type="EMBL" id="AE000511">
    <property type="protein sequence ID" value="AAD08212.1"/>
    <property type="molecule type" value="Genomic_DNA"/>
</dbReference>
<dbReference type="PIR" id="H64665">
    <property type="entry name" value="H64665"/>
</dbReference>
<dbReference type="RefSeq" id="NP_207959.1">
    <property type="nucleotide sequence ID" value="NC_000915.1"/>
</dbReference>
<dbReference type="FunCoup" id="P56190">
    <property type="interactions" value="75"/>
</dbReference>
<dbReference type="IntAct" id="P56190">
    <property type="interactions" value="2"/>
</dbReference>
<dbReference type="MINT" id="P56190"/>
<dbReference type="STRING" id="85962.HP_1168"/>
<dbReference type="PaxDb" id="85962-C694_06035"/>
<dbReference type="EnsemblBacteria" id="AAD08212">
    <property type="protein sequence ID" value="AAD08212"/>
    <property type="gene ID" value="HP_1168"/>
</dbReference>
<dbReference type="KEGG" id="heo:C694_06035"/>
<dbReference type="KEGG" id="hpy:HP_1168"/>
<dbReference type="PATRIC" id="fig|85962.47.peg.1255"/>
<dbReference type="eggNOG" id="COG1966">
    <property type="taxonomic scope" value="Bacteria"/>
</dbReference>
<dbReference type="InParanoid" id="P56190"/>
<dbReference type="OrthoDB" id="9761224at2"/>
<dbReference type="PhylomeDB" id="P56190"/>
<dbReference type="Proteomes" id="UP000000429">
    <property type="component" value="Chromosome"/>
</dbReference>
<dbReference type="GO" id="GO:0005886">
    <property type="term" value="C:plasma membrane"/>
    <property type="evidence" value="ECO:0000318"/>
    <property type="project" value="GO_Central"/>
</dbReference>
<dbReference type="GO" id="GO:0031669">
    <property type="term" value="P:cellular response to nutrient levels"/>
    <property type="evidence" value="ECO:0000318"/>
    <property type="project" value="GO_Central"/>
</dbReference>
<dbReference type="GO" id="GO:0009267">
    <property type="term" value="P:cellular response to starvation"/>
    <property type="evidence" value="ECO:0007669"/>
    <property type="project" value="InterPro"/>
</dbReference>
<dbReference type="GO" id="GO:0015833">
    <property type="term" value="P:peptide transport"/>
    <property type="evidence" value="ECO:0007669"/>
    <property type="project" value="UniProtKB-KW"/>
</dbReference>
<dbReference type="GO" id="GO:0015031">
    <property type="term" value="P:protein transport"/>
    <property type="evidence" value="ECO:0007669"/>
    <property type="project" value="UniProtKB-KW"/>
</dbReference>
<dbReference type="InterPro" id="IPR051605">
    <property type="entry name" value="CstA"/>
</dbReference>
<dbReference type="InterPro" id="IPR003706">
    <property type="entry name" value="CstA_N"/>
</dbReference>
<dbReference type="PANTHER" id="PTHR30252">
    <property type="entry name" value="INNER MEMBRANE PEPTIDE TRANSPORTER"/>
    <property type="match status" value="1"/>
</dbReference>
<dbReference type="PANTHER" id="PTHR30252:SF3">
    <property type="entry name" value="PYRUVATE_PROTON SYMPORTER BTST"/>
    <property type="match status" value="1"/>
</dbReference>
<dbReference type="Pfam" id="PF02554">
    <property type="entry name" value="CstA"/>
    <property type="match status" value="1"/>
</dbReference>
<organism>
    <name type="scientific">Helicobacter pylori (strain ATCC 700392 / 26695)</name>
    <name type="common">Campylobacter pylori</name>
    <dbReference type="NCBI Taxonomy" id="85962"/>
    <lineage>
        <taxon>Bacteria</taxon>
        <taxon>Pseudomonadati</taxon>
        <taxon>Campylobacterota</taxon>
        <taxon>Epsilonproteobacteria</taxon>
        <taxon>Campylobacterales</taxon>
        <taxon>Helicobacteraceae</taxon>
        <taxon>Helicobacter</taxon>
    </lineage>
</organism>
<feature type="chain" id="PRO_0000190047" description="Peptide transporter CstA">
    <location>
        <begin position="1"/>
        <end position="687"/>
    </location>
</feature>
<feature type="transmembrane region" description="Helical" evidence="2">
    <location>
        <begin position="6"/>
        <end position="26"/>
    </location>
</feature>
<feature type="transmembrane region" description="Helical" evidence="2">
    <location>
        <begin position="29"/>
        <end position="49"/>
    </location>
</feature>
<feature type="transmembrane region" description="Helical" evidence="2">
    <location>
        <begin position="87"/>
        <end position="107"/>
    </location>
</feature>
<feature type="transmembrane region" description="Helical" evidence="2">
    <location>
        <begin position="117"/>
        <end position="137"/>
    </location>
</feature>
<feature type="transmembrane region" description="Helical" evidence="2">
    <location>
        <begin position="162"/>
        <end position="182"/>
    </location>
</feature>
<feature type="transmembrane region" description="Helical" evidence="2">
    <location>
        <begin position="190"/>
        <end position="210"/>
    </location>
</feature>
<feature type="transmembrane region" description="Helical" evidence="2">
    <location>
        <begin position="221"/>
        <end position="241"/>
    </location>
</feature>
<feature type="transmembrane region" description="Helical" evidence="2">
    <location>
        <begin position="256"/>
        <end position="276"/>
    </location>
</feature>
<feature type="transmembrane region" description="Helical" evidence="2">
    <location>
        <begin position="285"/>
        <end position="305"/>
    </location>
</feature>
<feature type="transmembrane region" description="Helical" evidence="2">
    <location>
        <begin position="325"/>
        <end position="345"/>
    </location>
</feature>
<feature type="transmembrane region" description="Helical" evidence="2">
    <location>
        <begin position="373"/>
        <end position="393"/>
    </location>
</feature>
<feature type="transmembrane region" description="Helical" evidence="2">
    <location>
        <begin position="440"/>
        <end position="460"/>
    </location>
</feature>
<feature type="transmembrane region" description="Helical" evidence="2">
    <location>
        <begin position="462"/>
        <end position="482"/>
    </location>
</feature>
<feature type="transmembrane region" description="Helical" evidence="2">
    <location>
        <begin position="513"/>
        <end position="533"/>
    </location>
</feature>
<feature type="transmembrane region" description="Helical" evidence="2">
    <location>
        <begin position="546"/>
        <end position="566"/>
    </location>
</feature>
<feature type="transmembrane region" description="Helical" evidence="2">
    <location>
        <begin position="574"/>
        <end position="594"/>
    </location>
</feature>
<feature type="transmembrane region" description="Helical" evidence="2">
    <location>
        <begin position="642"/>
        <end position="662"/>
    </location>
</feature>
<proteinExistence type="inferred from homology"/>
<protein>
    <recommendedName>
        <fullName evidence="3">Peptide transporter CstA</fullName>
    </recommendedName>
    <alternativeName>
        <fullName evidence="3">Carbon starvation protein A homolog</fullName>
    </alternativeName>
</protein>
<comment type="function">
    <text evidence="1">Involved in peptide utilization.</text>
</comment>
<comment type="subcellular location">
    <subcellularLocation>
        <location evidence="3">Cell inner membrane</location>
        <topology evidence="2">Multi-pass membrane protein</topology>
    </subcellularLocation>
</comment>
<comment type="similarity">
    <text evidence="3">Belongs to the peptide transporter carbon starvation (CstA) (TC 2.A.114) family.</text>
</comment>
<evidence type="ECO:0000250" key="1">
    <source>
        <dbReference type="UniProtKB" id="P15078"/>
    </source>
</evidence>
<evidence type="ECO:0000255" key="2"/>
<evidence type="ECO:0000305" key="3"/>
<accession>P56190</accession>